<keyword id="KW-0325">Glycoprotein</keyword>
<keyword id="KW-0333">Golgi apparatus</keyword>
<keyword id="KW-0472">Membrane</keyword>
<keyword id="KW-1185">Reference proteome</keyword>
<keyword id="KW-0812">Transmembrane</keyword>
<keyword id="KW-1133">Transmembrane helix</keyword>
<feature type="chain" id="PRO_0000343011" description="Golgi apparatus membrane protein tvp18">
    <location>
        <begin position="1"/>
        <end position="151"/>
    </location>
</feature>
<feature type="transmembrane region" description="Helical" evidence="2">
    <location>
        <begin position="21"/>
        <end position="41"/>
    </location>
</feature>
<feature type="transmembrane region" description="Helical" evidence="2">
    <location>
        <begin position="43"/>
        <end position="63"/>
    </location>
</feature>
<feature type="transmembrane region" description="Helical" evidence="2">
    <location>
        <begin position="88"/>
        <end position="108"/>
    </location>
</feature>
<feature type="transmembrane region" description="Helical" evidence="2">
    <location>
        <begin position="110"/>
        <end position="130"/>
    </location>
</feature>
<feature type="glycosylation site" description="N-linked (GlcNAc...) asparagine" evidence="2">
    <location>
        <position position="11"/>
    </location>
</feature>
<accession>Q4WXT2</accession>
<dbReference type="EMBL" id="AAHF01000002">
    <property type="protein sequence ID" value="EAL92521.1"/>
    <property type="molecule type" value="Genomic_DNA"/>
</dbReference>
<dbReference type="RefSeq" id="XP_754559.1">
    <property type="nucleotide sequence ID" value="XM_749466.1"/>
</dbReference>
<dbReference type="FunCoup" id="Q4WXT2">
    <property type="interactions" value="45"/>
</dbReference>
<dbReference type="STRING" id="330879.Q4WXT2"/>
<dbReference type="GlyCosmos" id="Q4WXT2">
    <property type="glycosylation" value="1 site, No reported glycans"/>
</dbReference>
<dbReference type="EnsemblFungi" id="EAL92521">
    <property type="protein sequence ID" value="EAL92521"/>
    <property type="gene ID" value="AFUA_3G10600"/>
</dbReference>
<dbReference type="GeneID" id="3512438"/>
<dbReference type="KEGG" id="afm:AFUA_3G10600"/>
<dbReference type="VEuPathDB" id="FungiDB:Afu3g10600"/>
<dbReference type="eggNOG" id="ENOG502S3AC">
    <property type="taxonomic scope" value="Eukaryota"/>
</dbReference>
<dbReference type="HOGENOM" id="CLU_118698_0_0_1"/>
<dbReference type="InParanoid" id="Q4WXT2"/>
<dbReference type="OMA" id="IYAQWLG"/>
<dbReference type="OrthoDB" id="5591789at2759"/>
<dbReference type="Proteomes" id="UP000002530">
    <property type="component" value="Chromosome 3"/>
</dbReference>
<dbReference type="GO" id="GO:0000139">
    <property type="term" value="C:Golgi membrane"/>
    <property type="evidence" value="ECO:0000318"/>
    <property type="project" value="GO_Central"/>
</dbReference>
<dbReference type="GO" id="GO:0016192">
    <property type="term" value="P:vesicle-mediated transport"/>
    <property type="evidence" value="ECO:0000318"/>
    <property type="project" value="GO_Central"/>
</dbReference>
<dbReference type="InterPro" id="IPR019365">
    <property type="entry name" value="TVP18/Ca-channel_flower"/>
</dbReference>
<dbReference type="PANTHER" id="PTHR13314">
    <property type="entry name" value="CALCIUM CHANNEL FLOWER HOMOLOG"/>
    <property type="match status" value="1"/>
</dbReference>
<dbReference type="PANTHER" id="PTHR13314:SF2">
    <property type="entry name" value="CALCIUM CHANNEL FLOWER HOMOLOG"/>
    <property type="match status" value="1"/>
</dbReference>
<dbReference type="Pfam" id="PF10233">
    <property type="entry name" value="Cg6151-P"/>
    <property type="match status" value="1"/>
</dbReference>
<dbReference type="SMART" id="SM01077">
    <property type="entry name" value="Cg6151-P"/>
    <property type="match status" value="1"/>
</dbReference>
<proteinExistence type="inferred from homology"/>
<protein>
    <recommendedName>
        <fullName>Golgi apparatus membrane protein tvp18</fullName>
    </recommendedName>
</protein>
<sequence length="151" mass="16556">MTLAEEFRSRNFSIYGQWTGVLCIILCIALGIANIFSFAVLRIIFSVLCLISGLILIFIEVPFLLRICPTSSKFDAFIRRFTTNWMRAAMYGVMSVVQWLSLLPGSGASSLIVAAVFLLIASIFYALAGLKSQEFVGSKTLGGQGLVQMIV</sequence>
<name>TVP18_ASPFU</name>
<comment type="function">
    <text evidence="1">Golgi membrane protein involved in vesicular trafficking.</text>
</comment>
<comment type="subcellular location">
    <subcellularLocation>
        <location evidence="1">Golgi apparatus membrane</location>
        <topology evidence="1">Multi-pass membrane protein</topology>
    </subcellularLocation>
</comment>
<comment type="similarity">
    <text evidence="3">Belongs to the TVP18 family.</text>
</comment>
<reference key="1">
    <citation type="journal article" date="2005" name="Nature">
        <title>Genomic sequence of the pathogenic and allergenic filamentous fungus Aspergillus fumigatus.</title>
        <authorList>
            <person name="Nierman W.C."/>
            <person name="Pain A."/>
            <person name="Anderson M.J."/>
            <person name="Wortman J.R."/>
            <person name="Kim H.S."/>
            <person name="Arroyo J."/>
            <person name="Berriman M."/>
            <person name="Abe K."/>
            <person name="Archer D.B."/>
            <person name="Bermejo C."/>
            <person name="Bennett J.W."/>
            <person name="Bowyer P."/>
            <person name="Chen D."/>
            <person name="Collins M."/>
            <person name="Coulsen R."/>
            <person name="Davies R."/>
            <person name="Dyer P.S."/>
            <person name="Farman M.L."/>
            <person name="Fedorova N."/>
            <person name="Fedorova N.D."/>
            <person name="Feldblyum T.V."/>
            <person name="Fischer R."/>
            <person name="Fosker N."/>
            <person name="Fraser A."/>
            <person name="Garcia J.L."/>
            <person name="Garcia M.J."/>
            <person name="Goble A."/>
            <person name="Goldman G.H."/>
            <person name="Gomi K."/>
            <person name="Griffith-Jones S."/>
            <person name="Gwilliam R."/>
            <person name="Haas B.J."/>
            <person name="Haas H."/>
            <person name="Harris D.E."/>
            <person name="Horiuchi H."/>
            <person name="Huang J."/>
            <person name="Humphray S."/>
            <person name="Jimenez J."/>
            <person name="Keller N."/>
            <person name="Khouri H."/>
            <person name="Kitamoto K."/>
            <person name="Kobayashi T."/>
            <person name="Konzack S."/>
            <person name="Kulkarni R."/>
            <person name="Kumagai T."/>
            <person name="Lafton A."/>
            <person name="Latge J.-P."/>
            <person name="Li W."/>
            <person name="Lord A."/>
            <person name="Lu C."/>
            <person name="Majoros W.H."/>
            <person name="May G.S."/>
            <person name="Miller B.L."/>
            <person name="Mohamoud Y."/>
            <person name="Molina M."/>
            <person name="Monod M."/>
            <person name="Mouyna I."/>
            <person name="Mulligan S."/>
            <person name="Murphy L.D."/>
            <person name="O'Neil S."/>
            <person name="Paulsen I."/>
            <person name="Penalva M.A."/>
            <person name="Pertea M."/>
            <person name="Price C."/>
            <person name="Pritchard B.L."/>
            <person name="Quail M.A."/>
            <person name="Rabbinowitsch E."/>
            <person name="Rawlins N."/>
            <person name="Rajandream M.A."/>
            <person name="Reichard U."/>
            <person name="Renauld H."/>
            <person name="Robson G.D."/>
            <person name="Rodriguez de Cordoba S."/>
            <person name="Rodriguez-Pena J.M."/>
            <person name="Ronning C.M."/>
            <person name="Rutter S."/>
            <person name="Salzberg S.L."/>
            <person name="Sanchez M."/>
            <person name="Sanchez-Ferrero J.C."/>
            <person name="Saunders D."/>
            <person name="Seeger K."/>
            <person name="Squares R."/>
            <person name="Squares S."/>
            <person name="Takeuchi M."/>
            <person name="Tekaia F."/>
            <person name="Turner G."/>
            <person name="Vazquez de Aldana C.R."/>
            <person name="Weidman J."/>
            <person name="White O."/>
            <person name="Woodward J.R."/>
            <person name="Yu J.-H."/>
            <person name="Fraser C.M."/>
            <person name="Galagan J.E."/>
            <person name="Asai K."/>
            <person name="Machida M."/>
            <person name="Hall N."/>
            <person name="Barrell B.G."/>
            <person name="Denning D.W."/>
        </authorList>
    </citation>
    <scope>NUCLEOTIDE SEQUENCE [LARGE SCALE GENOMIC DNA]</scope>
    <source>
        <strain>ATCC MYA-4609 / CBS 101355 / FGSC A1100 / Af293</strain>
    </source>
</reference>
<organism>
    <name type="scientific">Aspergillus fumigatus (strain ATCC MYA-4609 / CBS 101355 / FGSC A1100 / Af293)</name>
    <name type="common">Neosartorya fumigata</name>
    <dbReference type="NCBI Taxonomy" id="330879"/>
    <lineage>
        <taxon>Eukaryota</taxon>
        <taxon>Fungi</taxon>
        <taxon>Dikarya</taxon>
        <taxon>Ascomycota</taxon>
        <taxon>Pezizomycotina</taxon>
        <taxon>Eurotiomycetes</taxon>
        <taxon>Eurotiomycetidae</taxon>
        <taxon>Eurotiales</taxon>
        <taxon>Aspergillaceae</taxon>
        <taxon>Aspergillus</taxon>
        <taxon>Aspergillus subgen. Fumigati</taxon>
    </lineage>
</organism>
<evidence type="ECO:0000250" key="1"/>
<evidence type="ECO:0000255" key="2"/>
<evidence type="ECO:0000305" key="3"/>
<gene>
    <name type="primary">tvp18</name>
    <name type="ORF">AFUA_3G10600</name>
</gene>